<reference key="1">
    <citation type="submission" date="2004-03" db="EMBL/GenBank/DDBJ databases">
        <title>Molecular phylogenetics of the Soricidae (Insectivora, Mammalia) based on mitochondrial cytochrome b gene sequences.</title>
        <authorList>
            <person name="Ohdachi S.D."/>
            <person name="Iwasa M.A."/>
            <person name="Abe H."/>
            <person name="Vogel P."/>
            <person name="Oshida T."/>
            <person name="Lin L.K."/>
            <person name="Hasegawa M."/>
        </authorList>
    </citation>
    <scope>NUCLEOTIDE SEQUENCE [GENOMIC DNA]</scope>
    <source>
        <tissue>Foot</tissue>
    </source>
</reference>
<geneLocation type="mitochondrion"/>
<sequence>MTNTRKTHPLMKILNNSFIDLPAPSNISPWWNFGSPLGICLIIQILTGLFLAMHYTSDTMTAFSSVTHICRDVNYGWLIRYLHANGASMFFICLFLHVGRGIYYGSYMFLETWNIGVLLLFAVMATAFMGYVLPWGQMSFWGATVITNLLSAIPYIGSDLVQWIWGGFSVDKATLTRFFAFHFILPFIVAALAGVHLLFLHETGSNNPSGLSSDADKIPFHPYYTIKDILGVLLLILALTSLVLFSPDLLGDPDNYTPANPLNTPPHIKPEWYFLFAYAILRSIPNKLGGVLALVLSILVLAIIPLLHTSKQRSMMFRPFSQCLFWILVADLITLTWIGGQPVEHPFIIIGQLASILYFFLILVLMPITSLLENNLLKW</sequence>
<accession>Q1XIM0</accession>
<proteinExistence type="inferred from homology"/>
<feature type="chain" id="PRO_0000254689" description="Cytochrome b">
    <location>
        <begin position="1"/>
        <end position="379"/>
    </location>
</feature>
<feature type="transmembrane region" description="Helical" evidence="2">
    <location>
        <begin position="33"/>
        <end position="53"/>
    </location>
</feature>
<feature type="transmembrane region" description="Helical" evidence="2">
    <location>
        <begin position="77"/>
        <end position="98"/>
    </location>
</feature>
<feature type="transmembrane region" description="Helical" evidence="2">
    <location>
        <begin position="113"/>
        <end position="133"/>
    </location>
</feature>
<feature type="transmembrane region" description="Helical" evidence="2">
    <location>
        <begin position="178"/>
        <end position="198"/>
    </location>
</feature>
<feature type="transmembrane region" description="Helical" evidence="2">
    <location>
        <begin position="226"/>
        <end position="246"/>
    </location>
</feature>
<feature type="transmembrane region" description="Helical" evidence="2">
    <location>
        <begin position="288"/>
        <end position="308"/>
    </location>
</feature>
<feature type="transmembrane region" description="Helical" evidence="2">
    <location>
        <begin position="320"/>
        <end position="340"/>
    </location>
</feature>
<feature type="transmembrane region" description="Helical" evidence="2">
    <location>
        <begin position="347"/>
        <end position="367"/>
    </location>
</feature>
<feature type="binding site" description="axial binding residue" evidence="2">
    <location>
        <position position="83"/>
    </location>
    <ligand>
        <name>heme b</name>
        <dbReference type="ChEBI" id="CHEBI:60344"/>
        <label>b562</label>
    </ligand>
    <ligandPart>
        <name>Fe</name>
        <dbReference type="ChEBI" id="CHEBI:18248"/>
    </ligandPart>
</feature>
<feature type="binding site" description="axial binding residue" evidence="2">
    <location>
        <position position="97"/>
    </location>
    <ligand>
        <name>heme b</name>
        <dbReference type="ChEBI" id="CHEBI:60344"/>
        <label>b566</label>
    </ligand>
    <ligandPart>
        <name>Fe</name>
        <dbReference type="ChEBI" id="CHEBI:18248"/>
    </ligandPart>
</feature>
<feature type="binding site" description="axial binding residue" evidence="2">
    <location>
        <position position="182"/>
    </location>
    <ligand>
        <name>heme b</name>
        <dbReference type="ChEBI" id="CHEBI:60344"/>
        <label>b562</label>
    </ligand>
    <ligandPart>
        <name>Fe</name>
        <dbReference type="ChEBI" id="CHEBI:18248"/>
    </ligandPart>
</feature>
<feature type="binding site" description="axial binding residue" evidence="2">
    <location>
        <position position="196"/>
    </location>
    <ligand>
        <name>heme b</name>
        <dbReference type="ChEBI" id="CHEBI:60344"/>
        <label>b566</label>
    </ligand>
    <ligandPart>
        <name>Fe</name>
        <dbReference type="ChEBI" id="CHEBI:18248"/>
    </ligandPart>
</feature>
<feature type="binding site" evidence="2">
    <location>
        <position position="201"/>
    </location>
    <ligand>
        <name>a ubiquinone</name>
        <dbReference type="ChEBI" id="CHEBI:16389"/>
    </ligand>
</feature>
<organism>
    <name type="scientific">Episoriculus leucops</name>
    <name type="common">Long-tailed brown-toothed shrew</name>
    <name type="synonym">Soriculus leucops</name>
    <dbReference type="NCBI Taxonomy" id="862700"/>
    <lineage>
        <taxon>Eukaryota</taxon>
        <taxon>Metazoa</taxon>
        <taxon>Chordata</taxon>
        <taxon>Craniata</taxon>
        <taxon>Vertebrata</taxon>
        <taxon>Euteleostomi</taxon>
        <taxon>Mammalia</taxon>
        <taxon>Eutheria</taxon>
        <taxon>Laurasiatheria</taxon>
        <taxon>Eulipotyphla</taxon>
        <taxon>Soricidae</taxon>
        <taxon>Soricinae</taxon>
        <taxon>Episoriculus</taxon>
    </lineage>
</organism>
<dbReference type="EMBL" id="AB175111">
    <property type="protein sequence ID" value="BAE92676.1"/>
    <property type="molecule type" value="Genomic_DNA"/>
</dbReference>
<dbReference type="SMR" id="Q1XIM0"/>
<dbReference type="GO" id="GO:0005743">
    <property type="term" value="C:mitochondrial inner membrane"/>
    <property type="evidence" value="ECO:0007669"/>
    <property type="project" value="UniProtKB-SubCell"/>
</dbReference>
<dbReference type="GO" id="GO:0045275">
    <property type="term" value="C:respiratory chain complex III"/>
    <property type="evidence" value="ECO:0007669"/>
    <property type="project" value="InterPro"/>
</dbReference>
<dbReference type="GO" id="GO:0046872">
    <property type="term" value="F:metal ion binding"/>
    <property type="evidence" value="ECO:0007669"/>
    <property type="project" value="UniProtKB-KW"/>
</dbReference>
<dbReference type="GO" id="GO:0008121">
    <property type="term" value="F:ubiquinol-cytochrome-c reductase activity"/>
    <property type="evidence" value="ECO:0007669"/>
    <property type="project" value="InterPro"/>
</dbReference>
<dbReference type="GO" id="GO:0006122">
    <property type="term" value="P:mitochondrial electron transport, ubiquinol to cytochrome c"/>
    <property type="evidence" value="ECO:0007669"/>
    <property type="project" value="TreeGrafter"/>
</dbReference>
<dbReference type="CDD" id="cd00290">
    <property type="entry name" value="cytochrome_b_C"/>
    <property type="match status" value="1"/>
</dbReference>
<dbReference type="CDD" id="cd00284">
    <property type="entry name" value="Cytochrome_b_N"/>
    <property type="match status" value="1"/>
</dbReference>
<dbReference type="FunFam" id="1.20.810.10:FF:000002">
    <property type="entry name" value="Cytochrome b"/>
    <property type="match status" value="1"/>
</dbReference>
<dbReference type="Gene3D" id="1.20.810.10">
    <property type="entry name" value="Cytochrome Bc1 Complex, Chain C"/>
    <property type="match status" value="1"/>
</dbReference>
<dbReference type="InterPro" id="IPR005798">
    <property type="entry name" value="Cyt_b/b6_C"/>
</dbReference>
<dbReference type="InterPro" id="IPR036150">
    <property type="entry name" value="Cyt_b/b6_C_sf"/>
</dbReference>
<dbReference type="InterPro" id="IPR005797">
    <property type="entry name" value="Cyt_b/b6_N"/>
</dbReference>
<dbReference type="InterPro" id="IPR027387">
    <property type="entry name" value="Cytb/b6-like_sf"/>
</dbReference>
<dbReference type="InterPro" id="IPR030689">
    <property type="entry name" value="Cytochrome_b"/>
</dbReference>
<dbReference type="InterPro" id="IPR048260">
    <property type="entry name" value="Cytochrome_b_C_euk/bac"/>
</dbReference>
<dbReference type="InterPro" id="IPR048259">
    <property type="entry name" value="Cytochrome_b_N_euk/bac"/>
</dbReference>
<dbReference type="InterPro" id="IPR016174">
    <property type="entry name" value="Di-haem_cyt_TM"/>
</dbReference>
<dbReference type="PANTHER" id="PTHR19271">
    <property type="entry name" value="CYTOCHROME B"/>
    <property type="match status" value="1"/>
</dbReference>
<dbReference type="PANTHER" id="PTHR19271:SF16">
    <property type="entry name" value="CYTOCHROME B"/>
    <property type="match status" value="1"/>
</dbReference>
<dbReference type="Pfam" id="PF00032">
    <property type="entry name" value="Cytochrom_B_C"/>
    <property type="match status" value="1"/>
</dbReference>
<dbReference type="Pfam" id="PF00033">
    <property type="entry name" value="Cytochrome_B"/>
    <property type="match status" value="1"/>
</dbReference>
<dbReference type="PIRSF" id="PIRSF038885">
    <property type="entry name" value="COB"/>
    <property type="match status" value="1"/>
</dbReference>
<dbReference type="SUPFAM" id="SSF81648">
    <property type="entry name" value="a domain/subunit of cytochrome bc1 complex (Ubiquinol-cytochrome c reductase)"/>
    <property type="match status" value="1"/>
</dbReference>
<dbReference type="SUPFAM" id="SSF81342">
    <property type="entry name" value="Transmembrane di-heme cytochromes"/>
    <property type="match status" value="1"/>
</dbReference>
<dbReference type="PROSITE" id="PS51003">
    <property type="entry name" value="CYTB_CTER"/>
    <property type="match status" value="1"/>
</dbReference>
<dbReference type="PROSITE" id="PS51002">
    <property type="entry name" value="CYTB_NTER"/>
    <property type="match status" value="1"/>
</dbReference>
<comment type="function">
    <text evidence="2">Component of the ubiquinol-cytochrome c reductase complex (complex III or cytochrome b-c1 complex) that is part of the mitochondrial respiratory chain. The b-c1 complex mediates electron transfer from ubiquinol to cytochrome c. Contributes to the generation of a proton gradient across the mitochondrial membrane that is then used for ATP synthesis.</text>
</comment>
<comment type="cofactor">
    <cofactor evidence="2">
        <name>heme b</name>
        <dbReference type="ChEBI" id="CHEBI:60344"/>
    </cofactor>
    <text evidence="2">Binds 2 heme b groups non-covalently.</text>
</comment>
<comment type="subunit">
    <text evidence="2">The cytochrome bc1 complex contains 11 subunits: 3 respiratory subunits (MT-CYB, CYC1 and UQCRFS1), 2 core proteins (UQCRC1 and UQCRC2) and 6 low-molecular weight proteins (UQCRH/QCR6, UQCRB/QCR7, UQCRQ/QCR8, UQCR10/QCR9, UQCR11/QCR10 and a cleavage product of UQCRFS1). This cytochrome bc1 complex then forms a dimer.</text>
</comment>
<comment type="subcellular location">
    <subcellularLocation>
        <location evidence="2">Mitochondrion inner membrane</location>
        <topology evidence="2">Multi-pass membrane protein</topology>
    </subcellularLocation>
</comment>
<comment type="miscellaneous">
    <text evidence="1">Heme 1 (or BL or b562) is low-potential and absorbs at about 562 nm, and heme 2 (or BH or b566) is high-potential and absorbs at about 566 nm.</text>
</comment>
<comment type="similarity">
    <text evidence="3 4">Belongs to the cytochrome b family.</text>
</comment>
<comment type="caution">
    <text evidence="2">The full-length protein contains only eight transmembrane helices, not nine as predicted by bioinformatics tools.</text>
</comment>
<gene>
    <name type="primary">MT-CYB</name>
    <name type="synonym">COB</name>
    <name type="synonym">CYTB</name>
    <name type="synonym">MTCYB</name>
</gene>
<name>CYB_EPILE</name>
<keyword id="KW-0249">Electron transport</keyword>
<keyword id="KW-0349">Heme</keyword>
<keyword id="KW-0408">Iron</keyword>
<keyword id="KW-0472">Membrane</keyword>
<keyword id="KW-0479">Metal-binding</keyword>
<keyword id="KW-0496">Mitochondrion</keyword>
<keyword id="KW-0999">Mitochondrion inner membrane</keyword>
<keyword id="KW-0679">Respiratory chain</keyword>
<keyword id="KW-0812">Transmembrane</keyword>
<keyword id="KW-1133">Transmembrane helix</keyword>
<keyword id="KW-0813">Transport</keyword>
<keyword id="KW-0830">Ubiquinone</keyword>
<evidence type="ECO:0000250" key="1"/>
<evidence type="ECO:0000250" key="2">
    <source>
        <dbReference type="UniProtKB" id="P00157"/>
    </source>
</evidence>
<evidence type="ECO:0000255" key="3">
    <source>
        <dbReference type="PROSITE-ProRule" id="PRU00967"/>
    </source>
</evidence>
<evidence type="ECO:0000255" key="4">
    <source>
        <dbReference type="PROSITE-ProRule" id="PRU00968"/>
    </source>
</evidence>
<protein>
    <recommendedName>
        <fullName>Cytochrome b</fullName>
    </recommendedName>
    <alternativeName>
        <fullName>Complex III subunit 3</fullName>
    </alternativeName>
    <alternativeName>
        <fullName>Complex III subunit III</fullName>
    </alternativeName>
    <alternativeName>
        <fullName>Cytochrome b-c1 complex subunit 3</fullName>
    </alternativeName>
    <alternativeName>
        <fullName>Ubiquinol-cytochrome-c reductase complex cytochrome b subunit</fullName>
    </alternativeName>
</protein>